<protein>
    <recommendedName>
        <fullName>CD40 ligand</fullName>
        <shortName>CD40-L</shortName>
    </recommendedName>
    <alternativeName>
        <fullName>Tumor necrosis factor ligand superfamily member 5</fullName>
    </alternativeName>
    <component>
        <recommendedName>
            <fullName>CD40 ligand, membrane form</fullName>
        </recommendedName>
    </component>
    <component>
        <recommendedName>
            <fullName evidence="3">CD40 ligand, soluble form</fullName>
            <shortName evidence="3">sCD40L</shortName>
        </recommendedName>
    </component>
</protein>
<keyword id="KW-1003">Cell membrane</keyword>
<keyword id="KW-0202">Cytokine</keyword>
<keyword id="KW-1015">Disulfide bond</keyword>
<keyword id="KW-0325">Glycoprotein</keyword>
<keyword id="KW-0472">Membrane</keyword>
<keyword id="KW-1185">Reference proteome</keyword>
<keyword id="KW-0964">Secreted</keyword>
<keyword id="KW-0735">Signal-anchor</keyword>
<keyword id="KW-0812">Transmembrane</keyword>
<keyword id="KW-1133">Transmembrane helix</keyword>
<dbReference type="EMBL" id="AJ243435">
    <property type="protein sequence ID" value="CAB95748.2"/>
    <property type="molecule type" value="mRNA"/>
</dbReference>
<dbReference type="RefSeq" id="NP_990064.1">
    <property type="nucleotide sequence ID" value="NM_204733.1"/>
</dbReference>
<dbReference type="SMR" id="Q9I8D8"/>
<dbReference type="FunCoup" id="Q9I8D8">
    <property type="interactions" value="83"/>
</dbReference>
<dbReference type="STRING" id="9031.ENSGALP00000010340"/>
<dbReference type="GlyCosmos" id="Q9I8D8">
    <property type="glycosylation" value="3 sites, No reported glycans"/>
</dbReference>
<dbReference type="GlyGen" id="Q9I8D8">
    <property type="glycosylation" value="3 sites"/>
</dbReference>
<dbReference type="PaxDb" id="9031-ENSGALP00000010340"/>
<dbReference type="GeneID" id="395485"/>
<dbReference type="KEGG" id="gga:395485"/>
<dbReference type="CTD" id="959"/>
<dbReference type="VEuPathDB" id="HostDB:geneid_395485"/>
<dbReference type="eggNOG" id="KOG3656">
    <property type="taxonomic scope" value="Eukaryota"/>
</dbReference>
<dbReference type="HOGENOM" id="CLU_093203_0_0_1"/>
<dbReference type="InParanoid" id="Q9I8D8"/>
<dbReference type="OrthoDB" id="8667946at2759"/>
<dbReference type="PhylomeDB" id="Q9I8D8"/>
<dbReference type="Reactome" id="R-GGA-198933">
    <property type="pathway name" value="Immunoregulatory interactions between a Lymphoid and a non-Lymphoid cell"/>
</dbReference>
<dbReference type="Reactome" id="R-GGA-5668541">
    <property type="pathway name" value="TNFR2 non-canonical NF-kB pathway"/>
</dbReference>
<dbReference type="Reactome" id="R-GGA-5676594">
    <property type="pathway name" value="TNF receptor superfamily (TNFSF) members mediating non-canonical NF-kB pathway"/>
</dbReference>
<dbReference type="PRO" id="PR:Q9I8D8"/>
<dbReference type="Proteomes" id="UP000000539">
    <property type="component" value="Chromosome 4"/>
</dbReference>
<dbReference type="Bgee" id="ENSGALG00000006415">
    <property type="expression patterns" value="Expressed in spleen and 8 other cell types or tissues"/>
</dbReference>
<dbReference type="GO" id="GO:0009986">
    <property type="term" value="C:cell surface"/>
    <property type="evidence" value="ECO:0007669"/>
    <property type="project" value="UniProtKB-SubCell"/>
</dbReference>
<dbReference type="GO" id="GO:0005615">
    <property type="term" value="C:extracellular space"/>
    <property type="evidence" value="ECO:0000318"/>
    <property type="project" value="GO_Central"/>
</dbReference>
<dbReference type="GO" id="GO:0005886">
    <property type="term" value="C:plasma membrane"/>
    <property type="evidence" value="ECO:0007669"/>
    <property type="project" value="UniProtKB-SubCell"/>
</dbReference>
<dbReference type="GO" id="GO:0005174">
    <property type="term" value="F:CD40 receptor binding"/>
    <property type="evidence" value="ECO:0000250"/>
    <property type="project" value="UniProtKB"/>
</dbReference>
<dbReference type="GO" id="GO:0005125">
    <property type="term" value="F:cytokine activity"/>
    <property type="evidence" value="ECO:0000318"/>
    <property type="project" value="GO_Central"/>
</dbReference>
<dbReference type="GO" id="GO:0005164">
    <property type="term" value="F:tumor necrosis factor receptor binding"/>
    <property type="evidence" value="ECO:0007669"/>
    <property type="project" value="InterPro"/>
</dbReference>
<dbReference type="GO" id="GO:0042100">
    <property type="term" value="P:B cell proliferation"/>
    <property type="evidence" value="ECO:0000250"/>
    <property type="project" value="UniProtKB"/>
</dbReference>
<dbReference type="GO" id="GO:0007166">
    <property type="term" value="P:cell surface receptor signaling pathway"/>
    <property type="evidence" value="ECO:0000318"/>
    <property type="project" value="GO_Central"/>
</dbReference>
<dbReference type="GO" id="GO:0006955">
    <property type="term" value="P:immune response"/>
    <property type="evidence" value="ECO:0007669"/>
    <property type="project" value="InterPro"/>
</dbReference>
<dbReference type="GO" id="GO:0006954">
    <property type="term" value="P:inflammatory response"/>
    <property type="evidence" value="ECO:0000250"/>
    <property type="project" value="UniProtKB"/>
</dbReference>
<dbReference type="GO" id="GO:0030168">
    <property type="term" value="P:platelet activation"/>
    <property type="evidence" value="ECO:0000250"/>
    <property type="project" value="UniProtKB"/>
</dbReference>
<dbReference type="GO" id="GO:0043123">
    <property type="term" value="P:positive regulation of canonical NF-kappaB signal transduction"/>
    <property type="evidence" value="ECO:0000318"/>
    <property type="project" value="GO_Central"/>
</dbReference>
<dbReference type="GO" id="GO:2001238">
    <property type="term" value="P:positive regulation of extrinsic apoptotic signaling pathway"/>
    <property type="evidence" value="ECO:0000318"/>
    <property type="project" value="GO_Central"/>
</dbReference>
<dbReference type="CDD" id="cd00184">
    <property type="entry name" value="TNF"/>
    <property type="match status" value="1"/>
</dbReference>
<dbReference type="FunFam" id="2.60.120.40:FF:000041">
    <property type="entry name" value="CD40 ligand"/>
    <property type="match status" value="1"/>
</dbReference>
<dbReference type="Gene3D" id="2.60.120.40">
    <property type="match status" value="1"/>
</dbReference>
<dbReference type="InterPro" id="IPR003263">
    <property type="entry name" value="CD40L"/>
</dbReference>
<dbReference type="InterPro" id="IPR021184">
    <property type="entry name" value="TNF_CS"/>
</dbReference>
<dbReference type="InterPro" id="IPR006052">
    <property type="entry name" value="TNF_dom"/>
</dbReference>
<dbReference type="InterPro" id="IPR008983">
    <property type="entry name" value="Tumour_necrosis_fac-like_dom"/>
</dbReference>
<dbReference type="PANTHER" id="PTHR11471:SF5">
    <property type="entry name" value="CD40 LIGAND"/>
    <property type="match status" value="1"/>
</dbReference>
<dbReference type="PANTHER" id="PTHR11471">
    <property type="entry name" value="TUMOR NECROSIS FACTOR FAMILY MEMBER"/>
    <property type="match status" value="1"/>
</dbReference>
<dbReference type="Pfam" id="PF00229">
    <property type="entry name" value="TNF"/>
    <property type="match status" value="1"/>
</dbReference>
<dbReference type="PIRSF" id="PIRSF016527">
    <property type="entry name" value="TNF_5"/>
    <property type="match status" value="1"/>
</dbReference>
<dbReference type="PRINTS" id="PR01702">
    <property type="entry name" value="CD40LIGAND"/>
</dbReference>
<dbReference type="SMART" id="SM00207">
    <property type="entry name" value="TNF"/>
    <property type="match status" value="1"/>
</dbReference>
<dbReference type="SUPFAM" id="SSF49842">
    <property type="entry name" value="TNF-like"/>
    <property type="match status" value="1"/>
</dbReference>
<dbReference type="PROSITE" id="PS00251">
    <property type="entry name" value="THD_1"/>
    <property type="match status" value="1"/>
</dbReference>
<dbReference type="PROSITE" id="PS50049">
    <property type="entry name" value="THD_2"/>
    <property type="match status" value="1"/>
</dbReference>
<proteinExistence type="evidence at transcript level"/>
<evidence type="ECO:0000250" key="1"/>
<evidence type="ECO:0000250" key="2">
    <source>
        <dbReference type="UniProtKB" id="P27548"/>
    </source>
</evidence>
<evidence type="ECO:0000250" key="3">
    <source>
        <dbReference type="UniProtKB" id="P29965"/>
    </source>
</evidence>
<evidence type="ECO:0000255" key="4"/>
<evidence type="ECO:0000255" key="5">
    <source>
        <dbReference type="PROSITE-ProRule" id="PRU01387"/>
    </source>
</evidence>
<evidence type="ECO:0000305" key="6"/>
<feature type="chain" id="PRO_0000034496" description="CD40 ligand, membrane form">
    <location>
        <begin position="1"/>
        <end position="272"/>
    </location>
</feature>
<feature type="chain" id="PRO_0000034497" description="CD40 ligand, soluble form" evidence="3">
    <location>
        <begin position="111"/>
        <end position="272"/>
    </location>
</feature>
<feature type="topological domain" description="Cytoplasmic" evidence="4">
    <location>
        <begin position="1"/>
        <end position="23"/>
    </location>
</feature>
<feature type="transmembrane region" description="Helical; Signal-anchor for type II membrane protein" evidence="4">
    <location>
        <begin position="24"/>
        <end position="44"/>
    </location>
</feature>
<feature type="topological domain" description="Extracellular" evidence="4">
    <location>
        <begin position="45"/>
        <end position="272"/>
    </location>
</feature>
<feature type="domain" description="THD" evidence="5">
    <location>
        <begin position="136"/>
        <end position="272"/>
    </location>
</feature>
<feature type="site" description="Cleavage" evidence="1">
    <location>
        <begin position="110"/>
        <end position="111"/>
    </location>
</feature>
<feature type="glycosylation site" description="N-linked (GlcNAc...) asparagine" evidence="4">
    <location>
        <position position="124"/>
    </location>
</feature>
<feature type="glycosylation site" description="N-linked (GlcNAc...) asparagine" evidence="4">
    <location>
        <position position="146"/>
    </location>
</feature>
<feature type="glycosylation site" description="N-linked (GlcNAc...) asparagine" evidence="4">
    <location>
        <position position="251"/>
    </location>
</feature>
<feature type="disulfide bond" evidence="5">
    <location>
        <begin position="190"/>
        <end position="229"/>
    </location>
</feature>
<gene>
    <name type="primary">CD40LG</name>
    <name type="synonym">CD40L</name>
    <name type="synonym">TNFSF5</name>
</gene>
<reference key="1">
    <citation type="submission" date="2003-03" db="EMBL/GenBank/DDBJ databases">
        <title>Cloning of a putative chicken CD40 ligand.</title>
        <authorList>
            <person name="Tregaskes C.A."/>
            <person name="Young J.R."/>
            <person name="Burnside J."/>
        </authorList>
    </citation>
    <scope>NUCLEOTIDE SEQUENCE [MRNA]</scope>
    <source>
        <strain>White leghorn</strain>
        <tissue>Spleen</tissue>
    </source>
</reference>
<sequence>MNEAYSPAAPRPMGSTSPSTMKMFMCFLSVFMVVQTIGTVLFCLYLHMKMDKMEEVLSLNEDYIFLRKVQKCQTGEDQKSTLLDCEKVLKGFQDLQCKDRTASEELPKFEMHRGHEHPHLKSRNETSVAEEKRQPIATHLAGVKSNTTVRVLKWMTTSYAPTSSLISYHEGKLKVEKAGLYYIYSQVSFCTKAAASAPFTLYIYLYLPMEEDRLLMKGLDTHSTSTALCELQSIREGGVFELRQGDMVFVNVTDSTAVNVNPGNTYFGMFKL</sequence>
<name>CD40L_CHICK</name>
<accession>Q9I8D8</accession>
<organism>
    <name type="scientific">Gallus gallus</name>
    <name type="common">Chicken</name>
    <dbReference type="NCBI Taxonomy" id="9031"/>
    <lineage>
        <taxon>Eukaryota</taxon>
        <taxon>Metazoa</taxon>
        <taxon>Chordata</taxon>
        <taxon>Craniata</taxon>
        <taxon>Vertebrata</taxon>
        <taxon>Euteleostomi</taxon>
        <taxon>Archelosauria</taxon>
        <taxon>Archosauria</taxon>
        <taxon>Dinosauria</taxon>
        <taxon>Saurischia</taxon>
        <taxon>Theropoda</taxon>
        <taxon>Coelurosauria</taxon>
        <taxon>Aves</taxon>
        <taxon>Neognathae</taxon>
        <taxon>Galloanserae</taxon>
        <taxon>Galliformes</taxon>
        <taxon>Phasianidae</taxon>
        <taxon>Phasianinae</taxon>
        <taxon>Gallus</taxon>
    </lineage>
</organism>
<comment type="function">
    <text evidence="2 3">Cytokine that acts as a ligand to CD40/TNFRSF5 (By similarity). Costimulates T-cell proliferation and cytokine production (By similarity). Induces the activation of NF-kappa-B (By similarity). Mediates B-cell proliferation in the absence of co-stimulus as well as IgE production in the presence of IL4 (By similarity). Involved in immunoglobulin class switching (By similarity).</text>
</comment>
<comment type="function">
    <molecule>CD40 ligand, soluble form</molecule>
    <text evidence="3">Acts as a ligand for integrins, specifically ITGA5:ITGB1 and ITGAV:ITGB3; both integrins and the CD40 receptor are required for activation of CD40-CD40LG signaling, which have cell-type dependent effects, such as B-cell activation, NF-kappa-B signaling and anti-apoptotic signaling.</text>
</comment>
<comment type="subunit">
    <text evidence="3">Homotrimer (By similarity). Interacts with CD28 (By similarity). CD40 ligand, soluble form: Exists as either a monomer or a homotrimer (By similarity). Forms a ternary complex between CD40 and integrins for CD40-CD40LG signaling (By similarity).</text>
</comment>
<comment type="subcellular location">
    <subcellularLocation>
        <location evidence="3">Cell membrane</location>
        <topology evidence="3">Single-pass type II membrane protein</topology>
    </subcellularLocation>
    <subcellularLocation>
        <location evidence="3">Cell surface</location>
    </subcellularLocation>
</comment>
<comment type="subcellular location">
    <molecule>CD40 ligand, soluble form</molecule>
    <subcellularLocation>
        <location evidence="3">Secreted</location>
    </subcellularLocation>
    <text evidence="3">Release of soluble CD40L from platelets is partially regulated by GP IIb/IIIa, actin polymerization, and a matrix metalloproteinases (MMP) inhibitor-sensitive pathway.</text>
</comment>
<comment type="PTM">
    <text evidence="3">The soluble form derives from the membrane form by proteolytic processing.</text>
</comment>
<comment type="similarity">
    <text evidence="6">Belongs to the tumor necrosis factor family.</text>
</comment>